<organism>
    <name type="scientific">Homo sapiens</name>
    <name type="common">Human</name>
    <dbReference type="NCBI Taxonomy" id="9606"/>
    <lineage>
        <taxon>Eukaryota</taxon>
        <taxon>Metazoa</taxon>
        <taxon>Chordata</taxon>
        <taxon>Craniata</taxon>
        <taxon>Vertebrata</taxon>
        <taxon>Euteleostomi</taxon>
        <taxon>Mammalia</taxon>
        <taxon>Eutheria</taxon>
        <taxon>Euarchontoglires</taxon>
        <taxon>Primates</taxon>
        <taxon>Haplorrhini</taxon>
        <taxon>Catarrhini</taxon>
        <taxon>Hominidae</taxon>
        <taxon>Homo</taxon>
    </lineage>
</organism>
<proteinExistence type="evidence at protein level"/>
<keyword id="KW-1064">Adaptive immunity</keyword>
<keyword id="KW-1003">Cell membrane</keyword>
<keyword id="KW-0325">Glycoprotein</keyword>
<keyword id="KW-0391">Immunity</keyword>
<keyword id="KW-0393">Immunoglobulin domain</keyword>
<keyword id="KW-0472">Membrane</keyword>
<keyword id="KW-0675">Receptor</keyword>
<keyword id="KW-1185">Reference proteome</keyword>
<keyword id="KW-0732">Signal</keyword>
<keyword id="KW-1279">T cell receptor</keyword>
<protein>
    <recommendedName>
        <fullName>Probable non-functional T cell receptor gamma variable 11</fullName>
    </recommendedName>
</protein>
<dbReference type="EMBL" id="AC006033">
    <property type="status" value="NOT_ANNOTATED_CDS"/>
    <property type="molecule type" value="Genomic_DNA"/>
</dbReference>
<dbReference type="SMR" id="A0A075B6L2"/>
<dbReference type="GlyCosmos" id="A0A075B6L2">
    <property type="glycosylation" value="1 site, No reported glycans"/>
</dbReference>
<dbReference type="GlyGen" id="A0A075B6L2">
    <property type="glycosylation" value="1 site"/>
</dbReference>
<dbReference type="BioMuta" id="TRGV11"/>
<dbReference type="Ensembl" id="ENST00000390340.3">
    <property type="protein sequence ID" value="ENSP00000374863.3"/>
    <property type="gene ID" value="ENSG00000211693.2"/>
</dbReference>
<dbReference type="UCSC" id="uc064cxu.1">
    <property type="organism name" value="human"/>
</dbReference>
<dbReference type="AGR" id="HGNC:12286"/>
<dbReference type="GeneCards" id="TRGV11"/>
<dbReference type="HGNC" id="HGNC:12286">
    <property type="gene designation" value="TRGV11"/>
</dbReference>
<dbReference type="HPA" id="ENSG00000211693">
    <property type="expression patterns" value="Not detected"/>
</dbReference>
<dbReference type="neXtProt" id="NX_A0A075B6L2"/>
<dbReference type="VEuPathDB" id="HostDB:ENSG00000211693"/>
<dbReference type="GeneTree" id="ENSGT00940000153143"/>
<dbReference type="HOGENOM" id="CLU_077975_7_0_1"/>
<dbReference type="InParanoid" id="A0A075B6L2"/>
<dbReference type="OrthoDB" id="8924181at2759"/>
<dbReference type="PAN-GO" id="A0A075B6L2">
    <property type="GO annotations" value="1 GO annotation based on evolutionary models"/>
</dbReference>
<dbReference type="PhylomeDB" id="A0A075B6L2"/>
<dbReference type="SignaLink" id="A0A075B6L2"/>
<dbReference type="PRO" id="PR:A0A075B6L2"/>
<dbReference type="Proteomes" id="UP000005640">
    <property type="component" value="Chromosome 7"/>
</dbReference>
<dbReference type="RNAct" id="A0A075B6L2">
    <property type="molecule type" value="protein"/>
</dbReference>
<dbReference type="Bgee" id="ENSG00000211693">
    <property type="expression patterns" value="Expressed in male germ line stem cell (sensu Vertebrata) in testis and 16 other cell types or tissues"/>
</dbReference>
<dbReference type="GO" id="GO:0042101">
    <property type="term" value="C:T cell receptor complex"/>
    <property type="evidence" value="ECO:0007669"/>
    <property type="project" value="UniProtKB-KW"/>
</dbReference>
<dbReference type="GO" id="GO:0002250">
    <property type="term" value="P:adaptive immune response"/>
    <property type="evidence" value="ECO:0007669"/>
    <property type="project" value="UniProtKB-KW"/>
</dbReference>
<dbReference type="FunFam" id="2.60.40.10:FF:001649">
    <property type="entry name" value="T cell receptor gamma, variable 3"/>
    <property type="match status" value="1"/>
</dbReference>
<dbReference type="Gene3D" id="2.60.40.10">
    <property type="entry name" value="Immunoglobulins"/>
    <property type="match status" value="1"/>
</dbReference>
<dbReference type="InterPro" id="IPR036179">
    <property type="entry name" value="Ig-like_dom_sf"/>
</dbReference>
<dbReference type="InterPro" id="IPR013783">
    <property type="entry name" value="Ig-like_fold"/>
</dbReference>
<dbReference type="InterPro" id="IPR051117">
    <property type="entry name" value="TRG_var/const_region"/>
</dbReference>
<dbReference type="PANTHER" id="PTHR19256:SF40">
    <property type="entry name" value="NON-FUNCTIONAL T CELL RECEPTOR GAMMA VARIABLE 10-RELATED"/>
    <property type="match status" value="1"/>
</dbReference>
<dbReference type="PANTHER" id="PTHR19256">
    <property type="entry name" value="T-CELL RECEPTOR GAMMA CHAIN"/>
    <property type="match status" value="1"/>
</dbReference>
<dbReference type="SUPFAM" id="SSF48726">
    <property type="entry name" value="Immunoglobulin"/>
    <property type="match status" value="1"/>
</dbReference>
<evidence type="ECO:0000255" key="1"/>
<evidence type="ECO:0000255" key="2">
    <source>
        <dbReference type="PROSITE-ProRule" id="PRU00114"/>
    </source>
</evidence>
<evidence type="ECO:0000303" key="3">
    <source>
    </source>
</evidence>
<evidence type="ECO:0000303" key="4">
    <source>
    </source>
</evidence>
<evidence type="ECO:0000303" key="5">
    <source>
    </source>
</evidence>
<evidence type="ECO:0000303" key="6">
    <source>
    </source>
</evidence>
<evidence type="ECO:0000303" key="7">
    <source>
    </source>
</evidence>
<evidence type="ECO:0000303" key="8">
    <source>
    </source>
</evidence>
<evidence type="ECO:0000303" key="9">
    <source ref="3"/>
</evidence>
<evidence type="ECO:0000305" key="10"/>
<evidence type="ECO:0000312" key="11">
    <source>
        <dbReference type="HGNC" id="HGNC:12286"/>
    </source>
</evidence>
<gene>
    <name evidence="9 11" type="primary">TRGV11</name>
</gene>
<accession>A0A075B6L2</accession>
<sequence>MPLVVAVIFFSLWVFALGQLEQPEISISRPANKSAHISWKASIQGFSSKIIHWYWQKPNKGLEYLLHVFLTISAQDCSGGKTKKLEVSKNAHTSTSTLKIKFLEKEDEVVYHCACWIRH</sequence>
<reference key="1">
    <citation type="journal article" date="2003" name="Nature">
        <title>The DNA sequence of human chromosome 7.</title>
        <authorList>
            <person name="Hillier L.W."/>
            <person name="Fulton R.S."/>
            <person name="Fulton L.A."/>
            <person name="Graves T.A."/>
            <person name="Pepin K.H."/>
            <person name="Wagner-McPherson C."/>
            <person name="Layman D."/>
            <person name="Maas J."/>
            <person name="Jaeger S."/>
            <person name="Walker R."/>
            <person name="Wylie K."/>
            <person name="Sekhon M."/>
            <person name="Becker M.C."/>
            <person name="O'Laughlin M.D."/>
            <person name="Schaller M.E."/>
            <person name="Fewell G.A."/>
            <person name="Delehaunty K.D."/>
            <person name="Miner T.L."/>
            <person name="Nash W.E."/>
            <person name="Cordes M."/>
            <person name="Du H."/>
            <person name="Sun H."/>
            <person name="Edwards J."/>
            <person name="Bradshaw-Cordum H."/>
            <person name="Ali J."/>
            <person name="Andrews S."/>
            <person name="Isak A."/>
            <person name="Vanbrunt A."/>
            <person name="Nguyen C."/>
            <person name="Du F."/>
            <person name="Lamar B."/>
            <person name="Courtney L."/>
            <person name="Kalicki J."/>
            <person name="Ozersky P."/>
            <person name="Bielicki L."/>
            <person name="Scott K."/>
            <person name="Holmes A."/>
            <person name="Harkins R."/>
            <person name="Harris A."/>
            <person name="Strong C.M."/>
            <person name="Hou S."/>
            <person name="Tomlinson C."/>
            <person name="Dauphin-Kohlberg S."/>
            <person name="Kozlowicz-Reilly A."/>
            <person name="Leonard S."/>
            <person name="Rohlfing T."/>
            <person name="Rock S.M."/>
            <person name="Tin-Wollam A.-M."/>
            <person name="Abbott A."/>
            <person name="Minx P."/>
            <person name="Maupin R."/>
            <person name="Strowmatt C."/>
            <person name="Latreille P."/>
            <person name="Miller N."/>
            <person name="Johnson D."/>
            <person name="Murray J."/>
            <person name="Woessner J.P."/>
            <person name="Wendl M.C."/>
            <person name="Yang S.-P."/>
            <person name="Schultz B.R."/>
            <person name="Wallis J.W."/>
            <person name="Spieth J."/>
            <person name="Bieri T.A."/>
            <person name="Nelson J.O."/>
            <person name="Berkowicz N."/>
            <person name="Wohldmann P.E."/>
            <person name="Cook L.L."/>
            <person name="Hickenbotham M.T."/>
            <person name="Eldred J."/>
            <person name="Williams D."/>
            <person name="Bedell J.A."/>
            <person name="Mardis E.R."/>
            <person name="Clifton S.W."/>
            <person name="Chissoe S.L."/>
            <person name="Marra M.A."/>
            <person name="Raymond C."/>
            <person name="Haugen E."/>
            <person name="Gillett W."/>
            <person name="Zhou Y."/>
            <person name="James R."/>
            <person name="Phelps K."/>
            <person name="Iadanoto S."/>
            <person name="Bubb K."/>
            <person name="Simms E."/>
            <person name="Levy R."/>
            <person name="Clendenning J."/>
            <person name="Kaul R."/>
            <person name="Kent W.J."/>
            <person name="Furey T.S."/>
            <person name="Baertsch R.A."/>
            <person name="Brent M.R."/>
            <person name="Keibler E."/>
            <person name="Flicek P."/>
            <person name="Bork P."/>
            <person name="Suyama M."/>
            <person name="Bailey J.A."/>
            <person name="Portnoy M.E."/>
            <person name="Torrents D."/>
            <person name="Chinwalla A.T."/>
            <person name="Gish W.R."/>
            <person name="Eddy S.R."/>
            <person name="McPherson J.D."/>
            <person name="Olson M.V."/>
            <person name="Eichler E.E."/>
            <person name="Green E.D."/>
            <person name="Waterston R.H."/>
            <person name="Wilson R.K."/>
        </authorList>
    </citation>
    <scope>NUCLEOTIDE SEQUENCE [LARGE SCALE GENOMIC DNA] (IMGT ALLELE TRGV11*01)</scope>
</reference>
<reference key="2">
    <citation type="journal article" date="1998" name="Exp. Clin. Immunogenet.">
        <title>IMGT (ImMunoGeneTics) locus on focus. A new section of Experimental and Clinical Immunogenetics.</title>
        <authorList>
            <person name="Lefranc M.P."/>
        </authorList>
    </citation>
    <scope>CHARACTERIZATION</scope>
</reference>
<reference key="3">
    <citation type="book" date="2001" name="The T Cell Receptor FactsBook.">
        <title>The T Cell Receptor FactsBook.</title>
        <editorList>
            <person name="Lefranc M.P."/>
            <person name="Lefranc G."/>
        </editorList>
        <authorList>
            <person name="Lefranc M.P."/>
            <person name="Lefranc G."/>
        </authorList>
    </citation>
    <scope>NOMENCLATURE</scope>
</reference>
<reference key="4">
    <citation type="journal article" date="2013" name="Nat. Rev. Immunol.">
        <title>Six-of-the-best: unique contributions of gammadelta T cells to immunology.</title>
        <authorList>
            <person name="Vantourout P."/>
            <person name="Hayday A."/>
        </authorList>
    </citation>
    <scope>REVIEW ON FUNCTION AND ANTIGEN RECOGNITION</scope>
</reference>
<reference key="5">
    <citation type="journal article" date="2014" name="Annu. Rev. Immunol.">
        <title>gammadelta T cells: first line of defense and beyond.</title>
        <authorList>
            <person name="Chien Y.H."/>
            <person name="Meyer C."/>
            <person name="Bonneville M."/>
        </authorList>
    </citation>
    <scope>REVIEW ONGAMMA DELTA T CELL RECEPTOR DIVERSITY</scope>
</reference>
<reference key="6">
    <citation type="journal article" date="2014" name="Front. Immunol.">
        <title>Immunoglobulin and T Cell Receptor Genes: IMGT((R)) and the Birth and Rise of Immunoinformatics.</title>
        <authorList>
            <person name="Lefranc M.P."/>
        </authorList>
    </citation>
    <scope>NOMENCLATURE</scope>
</reference>
<reference key="7">
    <citation type="journal article" date="2015" name="Front. Immunol.">
        <title>Five Layers of Receptor Signaling in gammadelta T-Cell Differentiation and Activation.</title>
        <authorList>
            <person name="Ribeiro S.T."/>
            <person name="Ribot J.C."/>
            <person name="Silva-Santos B."/>
        </authorList>
    </citation>
    <scope>REVIEW ON T CELL RECEPTOR SIGNALING</scope>
    <scope>SUBUNIT</scope>
</reference>
<reference key="8">
    <citation type="journal article" date="2017" name="Nat. Rev. Immunol.">
        <title>gammadelta T cells in homeostasis and host defence of epithelial barrier tissues.</title>
        <authorList>
            <person name="Nielsen M.M."/>
            <person name="Witherden D.A."/>
            <person name="Havran W.L."/>
        </authorList>
    </citation>
    <scope>REVIEW ON FUNCTION</scope>
</reference>
<feature type="signal peptide" evidence="1">
    <location>
        <begin position="1"/>
        <end position="18"/>
    </location>
</feature>
<feature type="chain" id="PRO_0000450774" description="Probable non-functional T cell receptor gamma variable 11" evidence="1">
    <location>
        <begin position="19"/>
        <end position="119"/>
    </location>
</feature>
<feature type="domain" description="Ig-like" evidence="2">
    <location>
        <begin position="23"/>
        <end position="119" status="greater than"/>
    </location>
</feature>
<feature type="glycosylation site" description="N-linked (GlcNAc...) asparagine" evidence="1">
    <location>
        <position position="32"/>
    </location>
</feature>
<feature type="non-terminal residue">
    <location>
        <position position="119"/>
    </location>
</feature>
<name>TVG11_HUMAN</name>
<comment type="function">
    <text evidence="3 4 5 6 7">Probable non-functional open reading frame (ORF) of V region of the variable domain of T cell receptor (TR) gamma chain (PubMed:24600447). Non-functional ORF generally cannot participate in the synthesis of a productive T cell receptor (TR) chain due to altered V-(D)-J or switch recombination and/or splicing site (at mRNA level) and/or conserved amino acid change (protein level) (PubMed:9619395). Gamma-delta TRs recognize a variety of self and foreign non-peptide antigens frequently expressed at the epithelial boundaries between the host and external environment, including endogenous lipids presented by MH-like protein CD1D and phosphoantigens presented by butyrophilin-like molecule BTN3A1. Upon antigen recognition induces rapid, innate-like immune responses involved in pathogen clearance and tissue repair (PubMed:23348415, PubMed:28920588). Binding of gamma-delta TR complex to antigen triggers phosphorylation of immunoreceptor tyrosine-based activation motifs (ITAMs) in the CD3 chains by the LCK and FYN kinases, allowing the recruitment, phosphorylation, and activation of ZAP70 that facilitates phosphorylation of the scaffolding proteins LCP2 and LAT. This lead to the formation of a supramolecular signalosome that recruits the phospholipase PLCG1, resulting in calcium mobilization and ERK activation, ultimately leading to T cell expansion and differentiation into effector cells (PubMed:25674089). Gamma-delta TRs are produced through somatic rearrangement of a limited repertoire of variable (V), diversity (D), and joining (J) genes. The potential diversity of gamma-delta TRs is conferred by the unique ability to rearrange (D) genes in tandem and to utilize all three reading frames. The combinatorial diversity is considerably increased by the sequence exonuclease trimming and random nucleotide (N) region additions which occur during the V-(D)-J rearrangements (PubMed:24387714).</text>
</comment>
<comment type="subunit">
    <text evidence="6 10">Most probably, the gamma-delta TR is not assembled due to incorrect folding of the gamma chain (Probable). Gamma-delta TR is a heterodimer composed of a gamma and delta chain; disulfide-linked. The gamma-delta TR is associated with the transmembrane signaling CD3 coreceptor proteins following the stoichiometry: a single gamma-delta TR heterodimer associates with one CD3D-CD3E heterodimer, one CD3G-CD3E heterodimer and one CD247 homodimer forming a stable octameric structure. Upon activation, gamma-delta TR complex associates with FCER1G to initiate intracellular signaling.</text>
</comment>
<comment type="subcellular location">
    <subcellularLocation>
        <location evidence="10">Cell membrane</location>
    </subcellularLocation>
</comment>
<comment type="polymorphism">
    <text evidence="10">There are several alleles. The sequence shown is that of IMGT allele TRGV11*01.</text>
</comment>
<comment type="caution">
    <text evidence="8 10">Most probably a non-functional protein that cannot participate to the synthesis of a productive T cell receptor (TR) chain due to both an altered splicing site and a mutation at position 39, corresponding to the first cysteine from the disulfide bridge, potentially leading to uncorrect folding (PubMed:9619395).</text>
</comment>